<reference key="1">
    <citation type="journal article" date="2007" name="Nat. Biotechnol.">
        <title>Genome sequencing and analysis of the versatile cell factory Aspergillus niger CBS 513.88.</title>
        <authorList>
            <person name="Pel H.J."/>
            <person name="de Winde J.H."/>
            <person name="Archer D.B."/>
            <person name="Dyer P.S."/>
            <person name="Hofmann G."/>
            <person name="Schaap P.J."/>
            <person name="Turner G."/>
            <person name="de Vries R.P."/>
            <person name="Albang R."/>
            <person name="Albermann K."/>
            <person name="Andersen M.R."/>
            <person name="Bendtsen J.D."/>
            <person name="Benen J.A.E."/>
            <person name="van den Berg M."/>
            <person name="Breestraat S."/>
            <person name="Caddick M.X."/>
            <person name="Contreras R."/>
            <person name="Cornell M."/>
            <person name="Coutinho P.M."/>
            <person name="Danchin E.G.J."/>
            <person name="Debets A.J.M."/>
            <person name="Dekker P."/>
            <person name="van Dijck P.W.M."/>
            <person name="van Dijk A."/>
            <person name="Dijkhuizen L."/>
            <person name="Driessen A.J.M."/>
            <person name="d'Enfert C."/>
            <person name="Geysens S."/>
            <person name="Goosen C."/>
            <person name="Groot G.S.P."/>
            <person name="de Groot P.W.J."/>
            <person name="Guillemette T."/>
            <person name="Henrissat B."/>
            <person name="Herweijer M."/>
            <person name="van den Hombergh J.P.T.W."/>
            <person name="van den Hondel C.A.M.J.J."/>
            <person name="van der Heijden R.T.J.M."/>
            <person name="van der Kaaij R.M."/>
            <person name="Klis F.M."/>
            <person name="Kools H.J."/>
            <person name="Kubicek C.P."/>
            <person name="van Kuyk P.A."/>
            <person name="Lauber J."/>
            <person name="Lu X."/>
            <person name="van der Maarel M.J.E.C."/>
            <person name="Meulenberg R."/>
            <person name="Menke H."/>
            <person name="Mortimer M.A."/>
            <person name="Nielsen J."/>
            <person name="Oliver S.G."/>
            <person name="Olsthoorn M."/>
            <person name="Pal K."/>
            <person name="van Peij N.N.M.E."/>
            <person name="Ram A.F.J."/>
            <person name="Rinas U."/>
            <person name="Roubos J.A."/>
            <person name="Sagt C.M.J."/>
            <person name="Schmoll M."/>
            <person name="Sun J."/>
            <person name="Ussery D."/>
            <person name="Varga J."/>
            <person name="Vervecken W."/>
            <person name="van de Vondervoort P.J.J."/>
            <person name="Wedler H."/>
            <person name="Woesten H.A.B."/>
            <person name="Zeng A.-P."/>
            <person name="van Ooyen A.J.J."/>
            <person name="Visser J."/>
            <person name="Stam H."/>
        </authorList>
    </citation>
    <scope>NUCLEOTIDE SEQUENCE [LARGE SCALE GENOMIC DNA]</scope>
    <source>
        <strain>ATCC MYA-4892 / CBS 513.88 / FGSC A1513</strain>
    </source>
</reference>
<feature type="chain" id="PRO_0000281693" description="ATP-dependent RNA helicase dbp2">
    <location>
        <begin position="1"/>
        <end position="565"/>
    </location>
</feature>
<feature type="domain" description="Helicase ATP-binding" evidence="2">
    <location>
        <begin position="168"/>
        <end position="343"/>
    </location>
</feature>
<feature type="domain" description="Helicase C-terminal" evidence="3">
    <location>
        <begin position="371"/>
        <end position="518"/>
    </location>
</feature>
<feature type="region of interest" description="Disordered" evidence="4">
    <location>
        <begin position="1"/>
        <end position="44"/>
    </location>
</feature>
<feature type="region of interest" description="Disordered" evidence="4">
    <location>
        <begin position="526"/>
        <end position="565"/>
    </location>
</feature>
<feature type="short sequence motif" description="Q motif">
    <location>
        <begin position="137"/>
        <end position="165"/>
    </location>
</feature>
<feature type="short sequence motif" description="DEAD box">
    <location>
        <begin position="291"/>
        <end position="294"/>
    </location>
</feature>
<feature type="compositionally biased region" description="Gly residues" evidence="4">
    <location>
        <begin position="1"/>
        <end position="10"/>
    </location>
</feature>
<feature type="compositionally biased region" description="Gly residues" evidence="4">
    <location>
        <begin position="19"/>
        <end position="44"/>
    </location>
</feature>
<feature type="compositionally biased region" description="Gly residues" evidence="4">
    <location>
        <begin position="526"/>
        <end position="546"/>
    </location>
</feature>
<feature type="binding site" evidence="2">
    <location>
        <begin position="181"/>
        <end position="188"/>
    </location>
    <ligand>
        <name>ATP</name>
        <dbReference type="ChEBI" id="CHEBI:30616"/>
    </ligand>
</feature>
<name>DBP2_ASPNC</name>
<sequence>MSSYGGGGGYQRDSYRSRNGGGGGGYGNGNGYSNGGGYGGGGGGGGYGGGGYGGGGYGGGGYGGRGGGAGGAGGDRMSNLGAGLKKQEWDLDSLPKFEKSFYKEHADVAERSQRDVDEFRKKHEMAVQGRNVPRPVETFDEAGFPQYVLSEVKAQGFDRPTAIQSQGWPMALSGRDVVGIAETGSGKTLTYCLPAIVHINAQPLLAPGDGPIVLILAPTRELAVQIQAEISKFGKSSRIRNTCVYGGVPKGPQIRDLSRGVEVCIATPGRLIDMLEAGRTNLRRVTYLVLDEADRMLDMGFEPQIRKIISQIRPDRQTCMWSATWPKEVRQLASDFLNDYIQVNIGSMDLSANHRITQIVEVVSDFEKRDKMIKHLEKIMENRANKCLIFTGTKRIADEITRFLRQDGWPALSIHGDKQQQERDWVLNEFKTGKSPIMVATDVASRGIDVRDITHVLNYDYPNNSEDYVHRIGRTGRAGAKGTAITFFTTDNSKQARDLVTILTEAKQQIDPRLAEMVRYSGGGGHGHGGYGRWGGRGGGRGGGRGRGNHFTASNAAPLGGNRRW</sequence>
<evidence type="ECO:0000250" key="1"/>
<evidence type="ECO:0000255" key="2">
    <source>
        <dbReference type="PROSITE-ProRule" id="PRU00541"/>
    </source>
</evidence>
<evidence type="ECO:0000255" key="3">
    <source>
        <dbReference type="PROSITE-ProRule" id="PRU00542"/>
    </source>
</evidence>
<evidence type="ECO:0000256" key="4">
    <source>
        <dbReference type="SAM" id="MobiDB-lite"/>
    </source>
</evidence>
<evidence type="ECO:0000305" key="5"/>
<gene>
    <name type="primary">dbp2</name>
    <name type="ORF">An02g02530</name>
</gene>
<organism>
    <name type="scientific">Aspergillus niger (strain ATCC MYA-4892 / CBS 513.88 / FGSC A1513)</name>
    <dbReference type="NCBI Taxonomy" id="425011"/>
    <lineage>
        <taxon>Eukaryota</taxon>
        <taxon>Fungi</taxon>
        <taxon>Dikarya</taxon>
        <taxon>Ascomycota</taxon>
        <taxon>Pezizomycotina</taxon>
        <taxon>Eurotiomycetes</taxon>
        <taxon>Eurotiomycetidae</taxon>
        <taxon>Eurotiales</taxon>
        <taxon>Aspergillaceae</taxon>
        <taxon>Aspergillus</taxon>
        <taxon>Aspergillus subgen. Circumdati</taxon>
    </lineage>
</organism>
<dbReference type="EC" id="3.6.4.13"/>
<dbReference type="EMBL" id="AM270001">
    <property type="protein sequence ID" value="CAK37534.1"/>
    <property type="molecule type" value="Genomic_DNA"/>
</dbReference>
<dbReference type="RefSeq" id="XP_001399394.2">
    <property type="nucleotide sequence ID" value="XM_001399357.2"/>
</dbReference>
<dbReference type="SMR" id="A2QC74"/>
<dbReference type="EnsemblFungi" id="CAK37534">
    <property type="protein sequence ID" value="CAK37534"/>
    <property type="gene ID" value="An02g02530"/>
</dbReference>
<dbReference type="GeneID" id="4978739"/>
<dbReference type="KEGG" id="ang:An02g02530"/>
<dbReference type="HOGENOM" id="CLU_003041_16_9_1"/>
<dbReference type="Proteomes" id="UP000006706">
    <property type="component" value="Chromosome 4R"/>
</dbReference>
<dbReference type="GO" id="GO:0005737">
    <property type="term" value="C:cytoplasm"/>
    <property type="evidence" value="ECO:0007669"/>
    <property type="project" value="UniProtKB-SubCell"/>
</dbReference>
<dbReference type="GO" id="GO:0005634">
    <property type="term" value="C:nucleus"/>
    <property type="evidence" value="ECO:0007669"/>
    <property type="project" value="UniProtKB-SubCell"/>
</dbReference>
<dbReference type="GO" id="GO:0005524">
    <property type="term" value="F:ATP binding"/>
    <property type="evidence" value="ECO:0007669"/>
    <property type="project" value="UniProtKB-KW"/>
</dbReference>
<dbReference type="GO" id="GO:0016887">
    <property type="term" value="F:ATP hydrolysis activity"/>
    <property type="evidence" value="ECO:0007669"/>
    <property type="project" value="RHEA"/>
</dbReference>
<dbReference type="GO" id="GO:0003723">
    <property type="term" value="F:RNA binding"/>
    <property type="evidence" value="ECO:0007669"/>
    <property type="project" value="UniProtKB-KW"/>
</dbReference>
<dbReference type="GO" id="GO:0003724">
    <property type="term" value="F:RNA helicase activity"/>
    <property type="evidence" value="ECO:0007669"/>
    <property type="project" value="UniProtKB-EC"/>
</dbReference>
<dbReference type="GO" id="GO:0000184">
    <property type="term" value="P:nuclear-transcribed mRNA catabolic process, nonsense-mediated decay"/>
    <property type="evidence" value="ECO:0007669"/>
    <property type="project" value="UniProtKB-KW"/>
</dbReference>
<dbReference type="GO" id="GO:0006364">
    <property type="term" value="P:rRNA processing"/>
    <property type="evidence" value="ECO:0007669"/>
    <property type="project" value="UniProtKB-KW"/>
</dbReference>
<dbReference type="CDD" id="cd17966">
    <property type="entry name" value="DEADc_DDX5_DDX17"/>
    <property type="match status" value="1"/>
</dbReference>
<dbReference type="CDD" id="cd18787">
    <property type="entry name" value="SF2_C_DEAD"/>
    <property type="match status" value="1"/>
</dbReference>
<dbReference type="FunFam" id="3.40.50.300:FF:000008">
    <property type="entry name" value="ATP-dependent RNA helicase RhlB"/>
    <property type="match status" value="1"/>
</dbReference>
<dbReference type="FunFam" id="3.40.50.300:FF:000079">
    <property type="entry name" value="probable ATP-dependent RNA helicase DDX17"/>
    <property type="match status" value="1"/>
</dbReference>
<dbReference type="Gene3D" id="3.40.50.300">
    <property type="entry name" value="P-loop containing nucleotide triphosphate hydrolases"/>
    <property type="match status" value="2"/>
</dbReference>
<dbReference type="InterPro" id="IPR011545">
    <property type="entry name" value="DEAD/DEAH_box_helicase_dom"/>
</dbReference>
<dbReference type="InterPro" id="IPR014001">
    <property type="entry name" value="Helicase_ATP-bd"/>
</dbReference>
<dbReference type="InterPro" id="IPR001650">
    <property type="entry name" value="Helicase_C-like"/>
</dbReference>
<dbReference type="InterPro" id="IPR027417">
    <property type="entry name" value="P-loop_NTPase"/>
</dbReference>
<dbReference type="InterPro" id="IPR000629">
    <property type="entry name" value="RNA-helicase_DEAD-box_CS"/>
</dbReference>
<dbReference type="InterPro" id="IPR014014">
    <property type="entry name" value="RNA_helicase_DEAD_Q_motif"/>
</dbReference>
<dbReference type="PANTHER" id="PTHR47958">
    <property type="entry name" value="ATP-DEPENDENT RNA HELICASE DBP3"/>
    <property type="match status" value="1"/>
</dbReference>
<dbReference type="Pfam" id="PF00270">
    <property type="entry name" value="DEAD"/>
    <property type="match status" value="1"/>
</dbReference>
<dbReference type="Pfam" id="PF00271">
    <property type="entry name" value="Helicase_C"/>
    <property type="match status" value="1"/>
</dbReference>
<dbReference type="SMART" id="SM00487">
    <property type="entry name" value="DEXDc"/>
    <property type="match status" value="1"/>
</dbReference>
<dbReference type="SMART" id="SM00490">
    <property type="entry name" value="HELICc"/>
    <property type="match status" value="1"/>
</dbReference>
<dbReference type="SUPFAM" id="SSF52540">
    <property type="entry name" value="P-loop containing nucleoside triphosphate hydrolases"/>
    <property type="match status" value="1"/>
</dbReference>
<dbReference type="PROSITE" id="PS00039">
    <property type="entry name" value="DEAD_ATP_HELICASE"/>
    <property type="match status" value="1"/>
</dbReference>
<dbReference type="PROSITE" id="PS51192">
    <property type="entry name" value="HELICASE_ATP_BIND_1"/>
    <property type="match status" value="1"/>
</dbReference>
<dbReference type="PROSITE" id="PS51194">
    <property type="entry name" value="HELICASE_CTER"/>
    <property type="match status" value="1"/>
</dbReference>
<dbReference type="PROSITE" id="PS51195">
    <property type="entry name" value="Q_MOTIF"/>
    <property type="match status" value="1"/>
</dbReference>
<comment type="function">
    <text evidence="1">ATP-dependent RNA helicase involved nonsense-mediated mRNA decay and ribosome biogenesis through rRNA processing.</text>
</comment>
<comment type="catalytic activity">
    <reaction>
        <text>ATP + H2O = ADP + phosphate + H(+)</text>
        <dbReference type="Rhea" id="RHEA:13065"/>
        <dbReference type="ChEBI" id="CHEBI:15377"/>
        <dbReference type="ChEBI" id="CHEBI:15378"/>
        <dbReference type="ChEBI" id="CHEBI:30616"/>
        <dbReference type="ChEBI" id="CHEBI:43474"/>
        <dbReference type="ChEBI" id="CHEBI:456216"/>
        <dbReference type="EC" id="3.6.4.13"/>
    </reaction>
</comment>
<comment type="subunit">
    <text evidence="1">Associates with polysomes.</text>
</comment>
<comment type="subcellular location">
    <subcellularLocation>
        <location evidence="1">Cytoplasm</location>
    </subcellularLocation>
    <subcellularLocation>
        <location evidence="1">Nucleus</location>
    </subcellularLocation>
</comment>
<comment type="domain">
    <text>The Q motif is unique to and characteristic of the DEAD box family of RNA helicases and controls ATP binding and hydrolysis.</text>
</comment>
<comment type="similarity">
    <text evidence="5">Belongs to the DEAD box helicase family. DDX5/DBP2 subfamily.</text>
</comment>
<accession>A2QC74</accession>
<protein>
    <recommendedName>
        <fullName>ATP-dependent RNA helicase dbp2</fullName>
        <ecNumber>3.6.4.13</ecNumber>
    </recommendedName>
</protein>
<keyword id="KW-0067">ATP-binding</keyword>
<keyword id="KW-0963">Cytoplasm</keyword>
<keyword id="KW-0347">Helicase</keyword>
<keyword id="KW-0378">Hydrolase</keyword>
<keyword id="KW-0866">Nonsense-mediated mRNA decay</keyword>
<keyword id="KW-0547">Nucleotide-binding</keyword>
<keyword id="KW-0539">Nucleus</keyword>
<keyword id="KW-1185">Reference proteome</keyword>
<keyword id="KW-0690">Ribosome biogenesis</keyword>
<keyword id="KW-0694">RNA-binding</keyword>
<keyword id="KW-0698">rRNA processing</keyword>
<proteinExistence type="inferred from homology"/>